<sequence>MGKIIGIDLGTTNSCVSILENGNVKVIENAEGARTTPSIVAYANDGEILVGQSAKRQAVTNPHNTLFAVKRLIGRRFEEDVVQKDIKLVPYKIVKANNGDAWVEASGKEMAPPQISAEVLKKMKKTAEDYLGEPVTEAVITVPAYFNDSQRQATKDAGRIAGLDVKRIINEPTAAALAYGMDKAKGDHTVIVYDLGGGTFDVSVIEIAEVDGEHQFEVLATNGDTFLGGEDFDMRLIDYLVDEFKKESGMDLKNDPLALQRLKEAAEKAKIELSSAQSTDVNLPYITADATGPKHLNVKISRAKLESLVEDLVNRTIEPCRIALKDAGIDASKIDDVILVGGQTRMPLVQKAVADFFGKEARKDVNPDEAVAMGAAIQGAVLAGDVKDVLLLDVSPLTLGIETMGGVMTPLIEKNTTIPTKKSQVFSTADDNQGAVTIHVLQGERKQASQNKSLGKFDLADIPPAPRGVPQIEVTFDIDANGILHVGAKDKATGKTQSIVIKANSGLSDEEIEKMVRDAEANAEEDRKFEELAAARNQGDALVHSTRKMVADAGDKVTAEEKTAIEAAVVALEAAVKGDDKAAIDAKVEELSKVSAPVAQKMYAEQSAEQPQGGAQQQAEPEAKHDDVVDAEFEEVKGDDKK</sequence>
<feature type="chain" id="PRO_1000119743" description="Chaperone protein DnaK">
    <location>
        <begin position="1"/>
        <end position="642"/>
    </location>
</feature>
<feature type="region of interest" description="Disordered" evidence="2">
    <location>
        <begin position="602"/>
        <end position="642"/>
    </location>
</feature>
<feature type="compositionally biased region" description="Low complexity" evidence="2">
    <location>
        <begin position="604"/>
        <end position="620"/>
    </location>
</feature>
<feature type="compositionally biased region" description="Basic and acidic residues" evidence="2">
    <location>
        <begin position="621"/>
        <end position="642"/>
    </location>
</feature>
<feature type="modified residue" description="Phosphothreonine; by autocatalysis" evidence="1">
    <location>
        <position position="199"/>
    </location>
</feature>
<proteinExistence type="inferred from homology"/>
<protein>
    <recommendedName>
        <fullName evidence="1">Chaperone protein DnaK</fullName>
    </recommendedName>
    <alternativeName>
        <fullName evidence="1">HSP70</fullName>
    </alternativeName>
    <alternativeName>
        <fullName evidence="1">Heat shock 70 kDa protein</fullName>
    </alternativeName>
    <alternativeName>
        <fullName evidence="1">Heat shock protein 70</fullName>
    </alternativeName>
</protein>
<evidence type="ECO:0000255" key="1">
    <source>
        <dbReference type="HAMAP-Rule" id="MF_00332"/>
    </source>
</evidence>
<evidence type="ECO:0000256" key="2">
    <source>
        <dbReference type="SAM" id="MobiDB-lite"/>
    </source>
</evidence>
<keyword id="KW-0067">ATP-binding</keyword>
<keyword id="KW-0143">Chaperone</keyword>
<keyword id="KW-0547">Nucleotide-binding</keyword>
<keyword id="KW-0597">Phosphoprotein</keyword>
<keyword id="KW-0346">Stress response</keyword>
<organism>
    <name type="scientific">Pseudomonas putida (strain W619)</name>
    <dbReference type="NCBI Taxonomy" id="390235"/>
    <lineage>
        <taxon>Bacteria</taxon>
        <taxon>Pseudomonadati</taxon>
        <taxon>Pseudomonadota</taxon>
        <taxon>Gammaproteobacteria</taxon>
        <taxon>Pseudomonadales</taxon>
        <taxon>Pseudomonadaceae</taxon>
        <taxon>Pseudomonas</taxon>
    </lineage>
</organism>
<name>DNAK_PSEPW</name>
<dbReference type="EMBL" id="CP000949">
    <property type="protein sequence ID" value="ACA71210.1"/>
    <property type="molecule type" value="Genomic_DNA"/>
</dbReference>
<dbReference type="SMR" id="B1J254"/>
<dbReference type="STRING" id="390235.PputW619_0705"/>
<dbReference type="KEGG" id="ppw:PputW619_0705"/>
<dbReference type="eggNOG" id="COG0443">
    <property type="taxonomic scope" value="Bacteria"/>
</dbReference>
<dbReference type="HOGENOM" id="CLU_005965_2_1_6"/>
<dbReference type="OrthoDB" id="9766019at2"/>
<dbReference type="GO" id="GO:0005524">
    <property type="term" value="F:ATP binding"/>
    <property type="evidence" value="ECO:0007669"/>
    <property type="project" value="UniProtKB-UniRule"/>
</dbReference>
<dbReference type="GO" id="GO:0140662">
    <property type="term" value="F:ATP-dependent protein folding chaperone"/>
    <property type="evidence" value="ECO:0007669"/>
    <property type="project" value="InterPro"/>
</dbReference>
<dbReference type="GO" id="GO:0051082">
    <property type="term" value="F:unfolded protein binding"/>
    <property type="evidence" value="ECO:0007669"/>
    <property type="project" value="InterPro"/>
</dbReference>
<dbReference type="CDD" id="cd10234">
    <property type="entry name" value="ASKHA_NBD_HSP70_DnaK-like"/>
    <property type="match status" value="1"/>
</dbReference>
<dbReference type="FunFam" id="2.60.34.10:FF:000014">
    <property type="entry name" value="Chaperone protein DnaK HSP70"/>
    <property type="match status" value="1"/>
</dbReference>
<dbReference type="FunFam" id="3.30.30.30:FF:000003">
    <property type="entry name" value="Heat shock protein 9"/>
    <property type="match status" value="1"/>
</dbReference>
<dbReference type="FunFam" id="1.20.1270.10:FF:000001">
    <property type="entry name" value="Molecular chaperone DnaK"/>
    <property type="match status" value="1"/>
</dbReference>
<dbReference type="FunFam" id="3.30.420.40:FF:000004">
    <property type="entry name" value="Molecular chaperone DnaK"/>
    <property type="match status" value="1"/>
</dbReference>
<dbReference type="FunFam" id="3.90.640.10:FF:000003">
    <property type="entry name" value="Molecular chaperone DnaK"/>
    <property type="match status" value="1"/>
</dbReference>
<dbReference type="Gene3D" id="1.20.1270.10">
    <property type="match status" value="1"/>
</dbReference>
<dbReference type="Gene3D" id="3.30.420.40">
    <property type="match status" value="2"/>
</dbReference>
<dbReference type="Gene3D" id="3.90.640.10">
    <property type="entry name" value="Actin, Chain A, domain 4"/>
    <property type="match status" value="1"/>
</dbReference>
<dbReference type="Gene3D" id="2.60.34.10">
    <property type="entry name" value="Substrate Binding Domain Of DNAk, Chain A, domain 1"/>
    <property type="match status" value="1"/>
</dbReference>
<dbReference type="HAMAP" id="MF_00332">
    <property type="entry name" value="DnaK"/>
    <property type="match status" value="1"/>
</dbReference>
<dbReference type="InterPro" id="IPR043129">
    <property type="entry name" value="ATPase_NBD"/>
</dbReference>
<dbReference type="InterPro" id="IPR012725">
    <property type="entry name" value="Chaperone_DnaK"/>
</dbReference>
<dbReference type="InterPro" id="IPR018181">
    <property type="entry name" value="Heat_shock_70_CS"/>
</dbReference>
<dbReference type="InterPro" id="IPR029048">
    <property type="entry name" value="HSP70_C_sf"/>
</dbReference>
<dbReference type="InterPro" id="IPR029047">
    <property type="entry name" value="HSP70_peptide-bd_sf"/>
</dbReference>
<dbReference type="InterPro" id="IPR013126">
    <property type="entry name" value="Hsp_70_fam"/>
</dbReference>
<dbReference type="NCBIfam" id="NF001413">
    <property type="entry name" value="PRK00290.1"/>
    <property type="match status" value="1"/>
</dbReference>
<dbReference type="NCBIfam" id="NF003520">
    <property type="entry name" value="PRK05183.1"/>
    <property type="match status" value="1"/>
</dbReference>
<dbReference type="NCBIfam" id="TIGR02350">
    <property type="entry name" value="prok_dnaK"/>
    <property type="match status" value="1"/>
</dbReference>
<dbReference type="PANTHER" id="PTHR19375">
    <property type="entry name" value="HEAT SHOCK PROTEIN 70KDA"/>
    <property type="match status" value="1"/>
</dbReference>
<dbReference type="Pfam" id="PF00012">
    <property type="entry name" value="HSP70"/>
    <property type="match status" value="1"/>
</dbReference>
<dbReference type="PRINTS" id="PR00301">
    <property type="entry name" value="HEATSHOCK70"/>
</dbReference>
<dbReference type="SUPFAM" id="SSF53067">
    <property type="entry name" value="Actin-like ATPase domain"/>
    <property type="match status" value="2"/>
</dbReference>
<dbReference type="SUPFAM" id="SSF100934">
    <property type="entry name" value="Heat shock protein 70kD (HSP70), C-terminal subdomain"/>
    <property type="match status" value="1"/>
</dbReference>
<dbReference type="SUPFAM" id="SSF100920">
    <property type="entry name" value="Heat shock protein 70kD (HSP70), peptide-binding domain"/>
    <property type="match status" value="1"/>
</dbReference>
<dbReference type="PROSITE" id="PS00297">
    <property type="entry name" value="HSP70_1"/>
    <property type="match status" value="1"/>
</dbReference>
<dbReference type="PROSITE" id="PS00329">
    <property type="entry name" value="HSP70_2"/>
    <property type="match status" value="1"/>
</dbReference>
<dbReference type="PROSITE" id="PS01036">
    <property type="entry name" value="HSP70_3"/>
    <property type="match status" value="1"/>
</dbReference>
<reference key="1">
    <citation type="submission" date="2008-02" db="EMBL/GenBank/DDBJ databases">
        <title>Complete sequence of Pseudomonas putida W619.</title>
        <authorList>
            <person name="Copeland A."/>
            <person name="Lucas S."/>
            <person name="Lapidus A."/>
            <person name="Barry K."/>
            <person name="Detter J.C."/>
            <person name="Glavina del Rio T."/>
            <person name="Dalin E."/>
            <person name="Tice H."/>
            <person name="Pitluck S."/>
            <person name="Chain P."/>
            <person name="Malfatti S."/>
            <person name="Shin M."/>
            <person name="Vergez L."/>
            <person name="Schmutz J."/>
            <person name="Larimer F."/>
            <person name="Land M."/>
            <person name="Hauser L."/>
            <person name="Kyrpides N."/>
            <person name="Kim E."/>
            <person name="Taghavi S."/>
            <person name="Vangronsveld D."/>
            <person name="van der Lelie D."/>
            <person name="Richardson P."/>
        </authorList>
    </citation>
    <scope>NUCLEOTIDE SEQUENCE [LARGE SCALE GENOMIC DNA]</scope>
    <source>
        <strain>W619</strain>
    </source>
</reference>
<comment type="function">
    <text evidence="1">Acts as a chaperone.</text>
</comment>
<comment type="induction">
    <text evidence="1">By stress conditions e.g. heat shock.</text>
</comment>
<comment type="similarity">
    <text evidence="1">Belongs to the heat shock protein 70 family.</text>
</comment>
<gene>
    <name evidence="1" type="primary">dnaK</name>
    <name type="ordered locus">PputW619_0705</name>
</gene>
<accession>B1J254</accession>